<comment type="function">
    <text evidence="1 3 4">ATPase which is responsible for recognizing, binding, unfolding and translocation of pupylated proteins into the bacterial 20S proteasome core particle. May be essential for opening the gate of the 20S proteasome via an interaction with its C-terminus, thereby allowing substrate entry and access to the site of proteolysis. Thus, the C-termini of the proteasomal ATPase may function like a 'key in a lock' to induce gate opening and therefore regulate proteolysis.</text>
</comment>
<comment type="activity regulation">
    <text evidence="4">ATPase activity is inhibited by N-ethylmaleimide (NEM) but not by sodium azide.</text>
</comment>
<comment type="biophysicochemical properties">
    <kinetics>
        <KM evidence="4">200 uM for ATP</KM>
        <Vmax evidence="4">268.0 pmol/min/ug enzyme</Vmax>
        <text>Is also able to cleave CTP at half the rate of ATP hydrolysis, but GTP or UTP are not substrates.</text>
    </kinetics>
    <phDependence>
        <text evidence="4">Optimum pH is 7-8.</text>
    </phDependence>
</comment>
<comment type="pathway">
    <text evidence="1">Protein degradation; proteasomal Pup-dependent pathway.</text>
</comment>
<comment type="subunit">
    <text evidence="1 2 3 4">Homohexamer. Assembles into a hexameric ring structure that likely caps the 20S proteasome core. Can form a complex composed of two stacked hexameric rings in vitro. Probably interacts with the prokaryotic ubiquitin-like protein Pup through a hydrophobic interface; the expected interacting region of ARC lies in its N-terminal coiled-coil domain. There is likely one Pup binding site per ARC hexamer ring. Upon ATP-binding, the C-terminus of ARC probably interacts with the alpha-rings of the proteasome core, possibly by binding to the intersubunit pockets.</text>
</comment>
<comment type="induction">
    <text evidence="4">Constitutively expressed.</text>
</comment>
<comment type="domain">
    <text evidence="2">Consists of three main regions, an N-terminal coiled-coil domain (residues 1-77) that probably binds to protein Pup and functions as a docking station, an interdomain (residues 78-227) involved in Mpa hexamerization, and a C-terminal ATPase domain of the AAA type (residues 228-533).</text>
</comment>
<comment type="similarity">
    <text evidence="1">Belongs to the AAA ATPase family.</text>
</comment>
<evidence type="ECO:0000255" key="1">
    <source>
        <dbReference type="HAMAP-Rule" id="MF_02112"/>
    </source>
</evidence>
<evidence type="ECO:0000269" key="2">
    <source>
    </source>
</evidence>
<evidence type="ECO:0000269" key="3">
    <source>
    </source>
</evidence>
<evidence type="ECO:0000269" key="4">
    <source>
    </source>
</evidence>
<evidence type="ECO:0007829" key="5">
    <source>
        <dbReference type="PDB" id="2WFW"/>
    </source>
</evidence>
<accession>O50202</accession>
<feature type="initiator methionine" description="Removed" evidence="4">
    <location>
        <position position="1"/>
    </location>
</feature>
<feature type="chain" id="PRO_0000383481" description="Proteasome-associated ATPase">
    <location>
        <begin position="2"/>
        <end position="591"/>
    </location>
</feature>
<feature type="region of interest" description="Docks into pockets in the proteasome alpha-ring" evidence="1">
    <location>
        <begin position="590"/>
        <end position="591"/>
    </location>
</feature>
<feature type="coiled-coil region" evidence="1">
    <location>
        <begin position="10"/>
        <end position="77"/>
    </location>
</feature>
<feature type="binding site" evidence="1">
    <location>
        <begin position="278"/>
        <end position="283"/>
    </location>
    <ligand>
        <name>ATP</name>
        <dbReference type="ChEBI" id="CHEBI:30616"/>
    </ligand>
</feature>
<feature type="strand" evidence="5">
    <location>
        <begin position="80"/>
        <end position="88"/>
    </location>
</feature>
<feature type="strand" evidence="5">
    <location>
        <begin position="94"/>
        <end position="98"/>
    </location>
</feature>
<feature type="strand" evidence="5">
    <location>
        <begin position="101"/>
        <end position="105"/>
    </location>
</feature>
<feature type="helix" evidence="5">
    <location>
        <begin position="113"/>
        <end position="115"/>
    </location>
</feature>
<feature type="strand" evidence="5">
    <location>
        <begin position="121"/>
        <end position="124"/>
    </location>
</feature>
<feature type="strand" evidence="5">
    <location>
        <begin position="130"/>
        <end position="133"/>
    </location>
</feature>
<feature type="strand" evidence="5">
    <location>
        <begin position="139"/>
        <end position="148"/>
    </location>
</feature>
<feature type="strand" evidence="5">
    <location>
        <begin position="152"/>
        <end position="158"/>
    </location>
</feature>
<feature type="strand" evidence="5">
    <location>
        <begin position="164"/>
        <end position="169"/>
    </location>
</feature>
<feature type="helix" evidence="5">
    <location>
        <begin position="171"/>
        <end position="176"/>
    </location>
</feature>
<feature type="strand" evidence="5">
    <location>
        <begin position="201"/>
        <end position="205"/>
    </location>
</feature>
<feature type="turn" evidence="5">
    <location>
        <begin position="206"/>
        <end position="209"/>
    </location>
</feature>
<feature type="strand" evidence="5">
    <location>
        <begin position="210"/>
        <end position="215"/>
    </location>
</feature>
<keyword id="KW-0002">3D-structure</keyword>
<keyword id="KW-0067">ATP-binding</keyword>
<keyword id="KW-0143">Chaperone</keyword>
<keyword id="KW-0175">Coiled coil</keyword>
<keyword id="KW-0903">Direct protein sequencing</keyword>
<keyword id="KW-0547">Nucleotide-binding</keyword>
<keyword id="KW-0647">Proteasome</keyword>
<dbReference type="EMBL" id="AF088800">
    <property type="protein sequence ID" value="AAC68690.1"/>
    <property type="molecule type" value="Genomic_DNA"/>
</dbReference>
<dbReference type="RefSeq" id="WP_003944870.1">
    <property type="nucleotide sequence ID" value="NZ_UGVH01000001.1"/>
</dbReference>
<dbReference type="PDB" id="2WFW">
    <property type="method" value="X-ray"/>
    <property type="resolution" value="1.60 A"/>
    <property type="chains" value="A/B/C=73-225"/>
</dbReference>
<dbReference type="PDBsum" id="2WFW"/>
<dbReference type="SMR" id="O50202"/>
<dbReference type="STRING" id="1833.XU06_14825"/>
<dbReference type="GeneID" id="93806137"/>
<dbReference type="OMA" id="CVDEFKE"/>
<dbReference type="OrthoDB" id="9809379at2"/>
<dbReference type="BRENDA" id="5.6.1.5">
    <property type="organism ID" value="5389"/>
</dbReference>
<dbReference type="UniPathway" id="UPA00997"/>
<dbReference type="EvolutionaryTrace" id="O50202"/>
<dbReference type="GO" id="GO:0000502">
    <property type="term" value="C:proteasome complex"/>
    <property type="evidence" value="ECO:0000317"/>
    <property type="project" value="UniProtKB"/>
</dbReference>
<dbReference type="GO" id="GO:0022623">
    <property type="term" value="C:proteasome-activating nucleotidase complex"/>
    <property type="evidence" value="ECO:0000317"/>
    <property type="project" value="UniProtKB"/>
</dbReference>
<dbReference type="GO" id="GO:0005524">
    <property type="term" value="F:ATP binding"/>
    <property type="evidence" value="ECO:0007669"/>
    <property type="project" value="UniProtKB-UniRule"/>
</dbReference>
<dbReference type="GO" id="GO:0016887">
    <property type="term" value="F:ATP hydrolysis activity"/>
    <property type="evidence" value="ECO:0000314"/>
    <property type="project" value="UniProtKB"/>
</dbReference>
<dbReference type="GO" id="GO:0043273">
    <property type="term" value="F:CTPase activity"/>
    <property type="evidence" value="ECO:0000314"/>
    <property type="project" value="UniProtKB"/>
</dbReference>
<dbReference type="GO" id="GO:0019941">
    <property type="term" value="P:modification-dependent protein catabolic process"/>
    <property type="evidence" value="ECO:0007669"/>
    <property type="project" value="InterPro"/>
</dbReference>
<dbReference type="GO" id="GO:0010498">
    <property type="term" value="P:proteasomal protein catabolic process"/>
    <property type="evidence" value="ECO:0000317"/>
    <property type="project" value="UniProtKB"/>
</dbReference>
<dbReference type="FunFam" id="1.20.5.170:FF:000018">
    <property type="entry name" value="AAA ATPase forming ring-shaped complexes"/>
    <property type="match status" value="1"/>
</dbReference>
<dbReference type="FunFam" id="2.40.50.140:FF:000169">
    <property type="entry name" value="AAA ATPase forming ring-shaped complexes"/>
    <property type="match status" value="1"/>
</dbReference>
<dbReference type="FunFam" id="3.40.50.300:FF:000155">
    <property type="entry name" value="AAA ATPase forming ring-shaped complexes"/>
    <property type="match status" value="1"/>
</dbReference>
<dbReference type="Gene3D" id="1.10.8.60">
    <property type="match status" value="1"/>
</dbReference>
<dbReference type="Gene3D" id="1.20.5.170">
    <property type="match status" value="1"/>
</dbReference>
<dbReference type="Gene3D" id="2.40.50.140">
    <property type="entry name" value="Nucleic acid-binding proteins"/>
    <property type="match status" value="2"/>
</dbReference>
<dbReference type="Gene3D" id="3.40.50.300">
    <property type="entry name" value="P-loop containing nucleotide triphosphate hydrolases"/>
    <property type="match status" value="1"/>
</dbReference>
<dbReference type="HAMAP" id="MF_02112">
    <property type="entry name" value="ARC_ATPase"/>
    <property type="match status" value="1"/>
</dbReference>
<dbReference type="InterPro" id="IPR003593">
    <property type="entry name" value="AAA+_ATPase"/>
</dbReference>
<dbReference type="InterPro" id="IPR050168">
    <property type="entry name" value="AAA_ATPase_domain"/>
</dbReference>
<dbReference type="InterPro" id="IPR003959">
    <property type="entry name" value="ATPase_AAA_core"/>
</dbReference>
<dbReference type="InterPro" id="IPR003960">
    <property type="entry name" value="ATPase_AAA_CS"/>
</dbReference>
<dbReference type="InterPro" id="IPR012340">
    <property type="entry name" value="NA-bd_OB-fold"/>
</dbReference>
<dbReference type="InterPro" id="IPR027417">
    <property type="entry name" value="P-loop_NTPase"/>
</dbReference>
<dbReference type="InterPro" id="IPR032501">
    <property type="entry name" value="Prot_ATP_ID_OB_2nd"/>
</dbReference>
<dbReference type="InterPro" id="IPR041626">
    <property type="entry name" value="Prot_ATP_ID_OB_N"/>
</dbReference>
<dbReference type="InterPro" id="IPR022482">
    <property type="entry name" value="Proteasome_ATPase"/>
</dbReference>
<dbReference type="NCBIfam" id="TIGR03689">
    <property type="entry name" value="pup_AAA"/>
    <property type="match status" value="1"/>
</dbReference>
<dbReference type="PANTHER" id="PTHR23077">
    <property type="entry name" value="AAA-FAMILY ATPASE"/>
    <property type="match status" value="1"/>
</dbReference>
<dbReference type="PANTHER" id="PTHR23077:SF144">
    <property type="entry name" value="PROTEASOME-ASSOCIATED ATPASE"/>
    <property type="match status" value="1"/>
</dbReference>
<dbReference type="Pfam" id="PF00004">
    <property type="entry name" value="AAA"/>
    <property type="match status" value="1"/>
</dbReference>
<dbReference type="Pfam" id="PF16450">
    <property type="entry name" value="Prot_ATP_ID_OB_C"/>
    <property type="match status" value="1"/>
</dbReference>
<dbReference type="Pfam" id="PF17758">
    <property type="entry name" value="Prot_ATP_ID_OB_N"/>
    <property type="match status" value="1"/>
</dbReference>
<dbReference type="SMART" id="SM00382">
    <property type="entry name" value="AAA"/>
    <property type="match status" value="1"/>
</dbReference>
<dbReference type="SUPFAM" id="SSF52540">
    <property type="entry name" value="P-loop containing nucleoside triphosphate hydrolases"/>
    <property type="match status" value="1"/>
</dbReference>
<dbReference type="PROSITE" id="PS00674">
    <property type="entry name" value="AAA"/>
    <property type="match status" value="1"/>
</dbReference>
<name>ARC_RHOER</name>
<organism>
    <name type="scientific">Rhodococcus erythropolis</name>
    <name type="common">Arthrobacter picolinophilus</name>
    <dbReference type="NCBI Taxonomy" id="1833"/>
    <lineage>
        <taxon>Bacteria</taxon>
        <taxon>Bacillati</taxon>
        <taxon>Actinomycetota</taxon>
        <taxon>Actinomycetes</taxon>
        <taxon>Mycobacteriales</taxon>
        <taxon>Nocardiaceae</taxon>
        <taxon>Rhodococcus</taxon>
        <taxon>Rhodococcus erythropolis group</taxon>
    </lineage>
</organism>
<protein>
    <recommendedName>
        <fullName evidence="1">Proteasome-associated ATPase</fullName>
    </recommendedName>
    <alternativeName>
        <fullName evidence="1">AAA ATPase forming ring-shaped complexes</fullName>
        <shortName evidence="1">ARC</shortName>
    </alternativeName>
    <alternativeName>
        <fullName evidence="1">Proteasomal ATPase</fullName>
    </alternativeName>
</protein>
<gene>
    <name evidence="1" type="primary">arc</name>
</gene>
<reference key="1">
    <citation type="journal article" date="1998" name="J. Mol. Biol.">
        <title>Characterization of ARC, a divergent member of the AAA ATPase family from Rhodococcus erythropolis.</title>
        <authorList>
            <person name="Wolf S."/>
            <person name="Nagy I."/>
            <person name="Lupas A."/>
            <person name="Pfeifer G."/>
            <person name="Cejka Z."/>
            <person name="Mueller S.A."/>
            <person name="Engel A."/>
            <person name="De Mot R."/>
            <person name="Baumeister W."/>
        </authorList>
    </citation>
    <scope>NUCLEOTIDE SEQUENCE [GENOMIC DNA]</scope>
    <scope>PROTEIN SEQUENCE OF N-TERMINUS</scope>
    <scope>CLEAVAGE OF INITIATOR METHIONINE</scope>
    <scope>FUNCTION AS AN ATPASE</scope>
    <scope>BIOPHYSICOCHEMICAL PROPERTIES</scope>
    <scope>ACTIVITY REGULATION</scope>
    <scope>INDUCTION</scope>
    <scope>SUBUNIT</scope>
    <source>
        <strain>NI86/21</strain>
    </source>
</reference>
<reference key="2">
    <citation type="journal article" date="2004" name="J. Struct. Biol.">
        <title>The N-terminal coiled coil of the Rhodococcus erythropolis ARC AAA ATPase is neither necessary for oligomerization nor nucleotide hydrolysis.</title>
        <authorList>
            <person name="Zhang X."/>
            <person name="Stoffels K."/>
            <person name="Wurzbacher S."/>
            <person name="Schoofs G."/>
            <person name="Pfeifer G."/>
            <person name="Banerjee T."/>
            <person name="Parret A.H."/>
            <person name="Baumeister W."/>
            <person name="De Mot R."/>
            <person name="Zwickl P."/>
        </authorList>
    </citation>
    <scope>DOMAIN</scope>
    <scope>SUBUNIT</scope>
    <source>
        <strain>NI86/21</strain>
    </source>
</reference>
<reference key="3">
    <citation type="journal article" date="2009" name="Mol. Cell">
        <title>Structure and activity of the N-terminal substrate recognition domains in proteasomal ATPases.</title>
        <authorList>
            <person name="Djuranovic S."/>
            <person name="Hartmann M.D."/>
            <person name="Habeck M."/>
            <person name="Ursinus A."/>
            <person name="Zwickl P."/>
            <person name="Martin J."/>
            <person name="Lupas A.N."/>
            <person name="Zeth K."/>
        </authorList>
    </citation>
    <scope>X-RAY CRYSTALLOGRAPHY (1.6 ANGSTROMS) OF 73-225</scope>
    <scope>FUNCTION AS A CHAPERONE</scope>
    <scope>SUBUNIT</scope>
</reference>
<proteinExistence type="evidence at protein level"/>
<sequence length="591" mass="65354">MSSTENPDSVAAAEELHALRVEAQVLRRQLAQSPEQVRELESKVDSLSIRNSKLMDTLKEARQQLIALREEVDRLGQPPSGYGVLLSVHEDKTVDVFTSGRKMRLTCSPNIDTDTLALGQTVRLNEALTIVEAGTYEQVGEISTLREVLDDGLRALVVGHADEERIVWLAAPLAAVFADPEADIIAYDADSPTRKLRPGDSLLVDTKAGYAFERIPKAEVEDLVLEEVPDVHYDDIGGLGRQIEQIRDAVELPFLHKDLFHEYSLRPPKGVLLYGPPGCGKTLIAKAVANSLAKKIAEARGQDSKDAKSYFLNIKGPELLNKFVGETERHIRMIFQRAREKASEGTPVIVFFDEMDSIFRTRGSGVSSDVETTVVPQLLSEIDGVEGLENVIVIGASNREDMIDPAILRPGRLDVKIKIERPDAESAQDIFSKYLVDGLPINADDLAEFGGDRTACLKAMIVRVVDRMYAESEENRFLEVTYANGDKEVLFFKDFNSGAMIQNIVDRAKKYAIKSVLDTGAPGLRVQHLFDSIVDEFAENEDLPNTTNPDDWARISGKKGERIVYIRTLVTGKNASASRAIDTESNTGQYL</sequence>